<proteinExistence type="inferred from homology"/>
<accession>A6LE91</accession>
<keyword id="KW-1185">Reference proteome</keyword>
<keyword id="KW-0687">Ribonucleoprotein</keyword>
<keyword id="KW-0689">Ribosomal protein</keyword>
<name>RS21_PARD8</name>
<organism>
    <name type="scientific">Parabacteroides distasonis (strain ATCC 8503 / DSM 20701 / CIP 104284 / JCM 5825 / NCTC 11152)</name>
    <dbReference type="NCBI Taxonomy" id="435591"/>
    <lineage>
        <taxon>Bacteria</taxon>
        <taxon>Pseudomonadati</taxon>
        <taxon>Bacteroidota</taxon>
        <taxon>Bacteroidia</taxon>
        <taxon>Bacteroidales</taxon>
        <taxon>Tannerellaceae</taxon>
        <taxon>Parabacteroides</taxon>
    </lineage>
</organism>
<dbReference type="EMBL" id="CP000140">
    <property type="protein sequence ID" value="ABR44005.1"/>
    <property type="molecule type" value="Genomic_DNA"/>
</dbReference>
<dbReference type="RefSeq" id="WP_005854174.1">
    <property type="nucleotide sequence ID" value="NZ_LR215978.1"/>
</dbReference>
<dbReference type="SMR" id="A6LE91"/>
<dbReference type="STRING" id="435591.BDI_2279"/>
<dbReference type="PaxDb" id="435591-BDI_2279"/>
<dbReference type="GeneID" id="93522278"/>
<dbReference type="KEGG" id="pdi:BDI_2279"/>
<dbReference type="eggNOG" id="COG0828">
    <property type="taxonomic scope" value="Bacteria"/>
</dbReference>
<dbReference type="HOGENOM" id="CLU_159258_2_0_10"/>
<dbReference type="BioCyc" id="PDIS435591:G1G5A-2342-MONOMER"/>
<dbReference type="Proteomes" id="UP000000566">
    <property type="component" value="Chromosome"/>
</dbReference>
<dbReference type="GO" id="GO:1990904">
    <property type="term" value="C:ribonucleoprotein complex"/>
    <property type="evidence" value="ECO:0007669"/>
    <property type="project" value="UniProtKB-KW"/>
</dbReference>
<dbReference type="GO" id="GO:0005840">
    <property type="term" value="C:ribosome"/>
    <property type="evidence" value="ECO:0007669"/>
    <property type="project" value="UniProtKB-KW"/>
</dbReference>
<dbReference type="GO" id="GO:0003735">
    <property type="term" value="F:structural constituent of ribosome"/>
    <property type="evidence" value="ECO:0007669"/>
    <property type="project" value="InterPro"/>
</dbReference>
<dbReference type="GO" id="GO:0006412">
    <property type="term" value="P:translation"/>
    <property type="evidence" value="ECO:0007669"/>
    <property type="project" value="UniProtKB-UniRule"/>
</dbReference>
<dbReference type="Gene3D" id="1.20.5.1150">
    <property type="entry name" value="Ribosomal protein S8"/>
    <property type="match status" value="1"/>
</dbReference>
<dbReference type="HAMAP" id="MF_00358">
    <property type="entry name" value="Ribosomal_bS21"/>
    <property type="match status" value="1"/>
</dbReference>
<dbReference type="InterPro" id="IPR001911">
    <property type="entry name" value="Ribosomal_bS21"/>
</dbReference>
<dbReference type="InterPro" id="IPR038380">
    <property type="entry name" value="Ribosomal_bS21_sf"/>
</dbReference>
<dbReference type="NCBIfam" id="TIGR00030">
    <property type="entry name" value="S21p"/>
    <property type="match status" value="1"/>
</dbReference>
<dbReference type="Pfam" id="PF01165">
    <property type="entry name" value="Ribosomal_S21"/>
    <property type="match status" value="1"/>
</dbReference>
<dbReference type="PRINTS" id="PR00976">
    <property type="entry name" value="RIBOSOMALS21"/>
</dbReference>
<feature type="chain" id="PRO_1000005144" description="Small ribosomal subunit protein bS21">
    <location>
        <begin position="1"/>
        <end position="63"/>
    </location>
</feature>
<evidence type="ECO:0000255" key="1">
    <source>
        <dbReference type="HAMAP-Rule" id="MF_00358"/>
    </source>
</evidence>
<evidence type="ECO:0000305" key="2"/>
<gene>
    <name evidence="1" type="primary">rpsU</name>
    <name type="ordered locus">BDI_2279</name>
</gene>
<reference key="1">
    <citation type="journal article" date="2007" name="PLoS Biol.">
        <title>Evolution of symbiotic bacteria in the distal human intestine.</title>
        <authorList>
            <person name="Xu J."/>
            <person name="Mahowald M.A."/>
            <person name="Ley R.E."/>
            <person name="Lozupone C.A."/>
            <person name="Hamady M."/>
            <person name="Martens E.C."/>
            <person name="Henrissat B."/>
            <person name="Coutinho P.M."/>
            <person name="Minx P."/>
            <person name="Latreille P."/>
            <person name="Cordum H."/>
            <person name="Van Brunt A."/>
            <person name="Kim K."/>
            <person name="Fulton R.S."/>
            <person name="Fulton L.A."/>
            <person name="Clifton S.W."/>
            <person name="Wilson R.K."/>
            <person name="Knight R.D."/>
            <person name="Gordon J.I."/>
        </authorList>
    </citation>
    <scope>NUCLEOTIDE SEQUENCE [LARGE SCALE GENOMIC DNA]</scope>
    <source>
        <strain>ATCC 8503 / DSM 20701 / CIP 104284 / JCM 5825 / NCTC 11152</strain>
    </source>
</reference>
<sequence>MIVVPLKEGENIEKALKKFKRKFEKTGVVKELRGRQAFEKPSVTKRKQTMRAIYVQHLQQVEE</sequence>
<protein>
    <recommendedName>
        <fullName evidence="1">Small ribosomal subunit protein bS21</fullName>
    </recommendedName>
    <alternativeName>
        <fullName evidence="2">30S ribosomal protein S21</fullName>
    </alternativeName>
</protein>
<comment type="similarity">
    <text evidence="1">Belongs to the bacterial ribosomal protein bS21 family.</text>
</comment>